<accession>P14538</accession>
<proteinExistence type="evidence at protein level"/>
<organism>
    <name type="scientific">Elephas maximus</name>
    <name type="common">Indian elephant</name>
    <dbReference type="NCBI Taxonomy" id="9783"/>
    <lineage>
        <taxon>Eukaryota</taxon>
        <taxon>Metazoa</taxon>
        <taxon>Chordata</taxon>
        <taxon>Craniata</taxon>
        <taxon>Vertebrata</taxon>
        <taxon>Euteleostomi</taxon>
        <taxon>Mammalia</taxon>
        <taxon>Eutheria</taxon>
        <taxon>Afrotheria</taxon>
        <taxon>Proboscidea</taxon>
        <taxon>Elephantidae</taxon>
        <taxon>Elephas</taxon>
    </lineage>
</organism>
<dbReference type="GlyCosmos" id="P14538">
    <property type="glycosylation" value="1 site, No reported glycans"/>
</dbReference>
<dbReference type="GO" id="GO:0005576">
    <property type="term" value="C:extracellular region"/>
    <property type="evidence" value="ECO:0007669"/>
    <property type="project" value="UniProtKB-SubCell"/>
</dbReference>
<dbReference type="GO" id="GO:0002250">
    <property type="term" value="P:adaptive immune response"/>
    <property type="evidence" value="ECO:0007669"/>
    <property type="project" value="UniProtKB-KW"/>
</dbReference>
<dbReference type="GO" id="GO:0007596">
    <property type="term" value="P:blood coagulation"/>
    <property type="evidence" value="ECO:0007669"/>
    <property type="project" value="UniProtKB-KW"/>
</dbReference>
<dbReference type="GO" id="GO:0045087">
    <property type="term" value="P:innate immune response"/>
    <property type="evidence" value="ECO:0007669"/>
    <property type="project" value="UniProtKB-KW"/>
</dbReference>
<keyword id="KW-1064">Adaptive immunity</keyword>
<keyword id="KW-0094">Blood coagulation</keyword>
<keyword id="KW-0175">Coiled coil</keyword>
<keyword id="KW-0903">Direct protein sequencing</keyword>
<keyword id="KW-1015">Disulfide bond</keyword>
<keyword id="KW-0325">Glycoprotein</keyword>
<keyword id="KW-0356">Hemostasis</keyword>
<keyword id="KW-0391">Immunity</keyword>
<keyword id="KW-0399">Innate immunity</keyword>
<keyword id="KW-0964">Secreted</keyword>
<keyword id="KW-0765">Sulfation</keyword>
<name>FIBB_ELEMA</name>
<gene>
    <name type="primary">FGB</name>
</gene>
<sequence>ATDYEDEEFPGAVPPSVGAR</sequence>
<reference key="1">
    <citation type="journal article" date="1973" name="Syst. Zool.">
        <title>Mammalian phylogeny based on fibrinopeptide amino acid sequences.</title>
        <authorList>
            <person name="O'Neil P.B."/>
            <person name="Doolittle R.F."/>
        </authorList>
    </citation>
    <scope>PROTEIN SEQUENCE</scope>
    <scope>SULFATION AT TYR-4</scope>
</reference>
<evidence type="ECO:0000250" key="1">
    <source>
        <dbReference type="UniProtKB" id="E9PV24"/>
    </source>
</evidence>
<evidence type="ECO:0000250" key="2">
    <source>
        <dbReference type="UniProtKB" id="P02675"/>
    </source>
</evidence>
<evidence type="ECO:0000250" key="3">
    <source>
        <dbReference type="UniProtKB" id="P02676"/>
    </source>
</evidence>
<evidence type="ECO:0000256" key="4">
    <source>
        <dbReference type="SAM" id="MobiDB-lite"/>
    </source>
</evidence>
<evidence type="ECO:0000269" key="5">
    <source ref="1"/>
</evidence>
<protein>
    <recommendedName>
        <fullName>Fibrinogen beta chain</fullName>
    </recommendedName>
    <component>
        <recommendedName>
            <fullName>Fibrinopeptide B</fullName>
        </recommendedName>
    </component>
</protein>
<comment type="function">
    <text evidence="1">Cleaved by the protease thrombin to yield monomers which, together with fibrinogen alpha (FGA) and fibrinogen gamma (FGG), polymerize to form an insoluble fibrin matrix. Fibrin has a major function in hemostasis as one of the primary components of blood clots. In addition, functions during the early stages of wound repair to stabilize the lesion and guide cell migration during re-epithelialization. Was originally thought to be essential for platelet aggregation, based on in vitro studies using anticoagulated blood. However subsequent studies have shown that it is not absolutely required for thrombus formation in vivo. Enhances expression of SELP in activated platelets. Maternal fibrinogen is essential for successful pregnancy. Fibrin deposition is also associated with infection, where it protects against IFNG-mediated hemorrhage. May also facilitate the antibacterial immune response via both innate and T-cell mediated pathways.</text>
</comment>
<comment type="subunit">
    <text evidence="2">Heterohexamer; disulfide linked. Contains 2 sets of 3 non-identical chains (alpha, beta and gamma). The 2 heterotrimers are in head to head conformation with the N-termini in a small central domain (By similarity).</text>
</comment>
<comment type="subcellular location">
    <subcellularLocation>
        <location>Secreted</location>
    </subcellularLocation>
</comment>
<comment type="domain">
    <text evidence="2">A long coiled coil structure formed by 3 polypeptide chains connects the central nodule to the C-terminal domains (distal nodules). The long C-terminal ends of the alpha chains fold back, contributing a fourth strand to the coiled coil structure.</text>
</comment>
<comment type="PTM">
    <text>Conversion of fibrinogen to fibrin is triggered by thrombin, which cleaves fibrinopeptides A and B from alpha and beta chains, and thus exposes the N-terminal polymerization sites responsible for the formation of the soft clot.</text>
</comment>
<feature type="peptide" id="PRO_0000009065" description="Fibrinopeptide B">
    <location>
        <begin position="1"/>
        <end position="20"/>
    </location>
</feature>
<feature type="region of interest" description="Disordered" evidence="4">
    <location>
        <begin position="1"/>
        <end position="20"/>
    </location>
</feature>
<feature type="modified residue" description="Sulfotyrosine" evidence="5">
    <location>
        <position position="4"/>
    </location>
</feature>
<feature type="glycosylation site" description="O-linked (GalNAc...) threonine" evidence="3">
    <location>
        <position position="2"/>
    </location>
</feature>
<feature type="non-terminal residue">
    <location>
        <position position="20"/>
    </location>
</feature>